<gene>
    <name evidence="1" type="primary">trmD</name>
    <name type="ordered locus">Npun_F5825</name>
</gene>
<sequence length="238" mass="26391">MRFDIVTLFPDCFNSVLNSGLLGKALAKQIAEVHLVNPRDFTTDKHRKVDDEPYGGGVGMLMKPEPIFTAVESLPVLPRREIILMSPQGQTINQSLLKELVTNYDQLVVICGHYEGVDERVLHLVTREVSLGDFILTGGEIPAMALINGVVRLIPGTVAKTESLTAESFEEGLLDYPQYTRPANFRGLKVPDVLLSGNHAAIAQWRYEQQIQKTRDRRPDLLEKLEQGKQGSRGAGGE</sequence>
<organism>
    <name type="scientific">Nostoc punctiforme (strain ATCC 29133 / PCC 73102)</name>
    <dbReference type="NCBI Taxonomy" id="63737"/>
    <lineage>
        <taxon>Bacteria</taxon>
        <taxon>Bacillati</taxon>
        <taxon>Cyanobacteriota</taxon>
        <taxon>Cyanophyceae</taxon>
        <taxon>Nostocales</taxon>
        <taxon>Nostocaceae</taxon>
        <taxon>Nostoc</taxon>
    </lineage>
</organism>
<keyword id="KW-0963">Cytoplasm</keyword>
<keyword id="KW-0489">Methyltransferase</keyword>
<keyword id="KW-1185">Reference proteome</keyword>
<keyword id="KW-0949">S-adenosyl-L-methionine</keyword>
<keyword id="KW-0808">Transferase</keyword>
<keyword id="KW-0819">tRNA processing</keyword>
<accession>B2JA48</accession>
<feature type="chain" id="PRO_1000130192" description="tRNA (guanine-N(1)-)-methyltransferase">
    <location>
        <begin position="1"/>
        <end position="238"/>
    </location>
</feature>
<feature type="binding site" evidence="1">
    <location>
        <position position="112"/>
    </location>
    <ligand>
        <name>S-adenosyl-L-methionine</name>
        <dbReference type="ChEBI" id="CHEBI:59789"/>
    </ligand>
</feature>
<feature type="binding site" evidence="1">
    <location>
        <begin position="131"/>
        <end position="136"/>
    </location>
    <ligand>
        <name>S-adenosyl-L-methionine</name>
        <dbReference type="ChEBI" id="CHEBI:59789"/>
    </ligand>
</feature>
<comment type="function">
    <text evidence="1">Specifically methylates guanosine-37 in various tRNAs.</text>
</comment>
<comment type="catalytic activity">
    <reaction evidence="1">
        <text>guanosine(37) in tRNA + S-adenosyl-L-methionine = N(1)-methylguanosine(37) in tRNA + S-adenosyl-L-homocysteine + H(+)</text>
        <dbReference type="Rhea" id="RHEA:36899"/>
        <dbReference type="Rhea" id="RHEA-COMP:10145"/>
        <dbReference type="Rhea" id="RHEA-COMP:10147"/>
        <dbReference type="ChEBI" id="CHEBI:15378"/>
        <dbReference type="ChEBI" id="CHEBI:57856"/>
        <dbReference type="ChEBI" id="CHEBI:59789"/>
        <dbReference type="ChEBI" id="CHEBI:73542"/>
        <dbReference type="ChEBI" id="CHEBI:74269"/>
        <dbReference type="EC" id="2.1.1.228"/>
    </reaction>
</comment>
<comment type="subunit">
    <text evidence="1">Homodimer.</text>
</comment>
<comment type="subcellular location">
    <subcellularLocation>
        <location evidence="1">Cytoplasm</location>
    </subcellularLocation>
</comment>
<comment type="similarity">
    <text evidence="1">Belongs to the RNA methyltransferase TrmD family.</text>
</comment>
<proteinExistence type="inferred from homology"/>
<dbReference type="EC" id="2.1.1.228" evidence="1"/>
<dbReference type="EMBL" id="CP001037">
    <property type="protein sequence ID" value="ACC84123.1"/>
    <property type="molecule type" value="Genomic_DNA"/>
</dbReference>
<dbReference type="RefSeq" id="WP_012412066.1">
    <property type="nucleotide sequence ID" value="NC_010628.1"/>
</dbReference>
<dbReference type="SMR" id="B2JA48"/>
<dbReference type="STRING" id="63737.Npun_F5825"/>
<dbReference type="EnsemblBacteria" id="ACC84123">
    <property type="protein sequence ID" value="ACC84123"/>
    <property type="gene ID" value="Npun_F5825"/>
</dbReference>
<dbReference type="KEGG" id="npu:Npun_F5825"/>
<dbReference type="eggNOG" id="COG0336">
    <property type="taxonomic scope" value="Bacteria"/>
</dbReference>
<dbReference type="HOGENOM" id="CLU_047363_0_1_3"/>
<dbReference type="OrthoDB" id="9807416at2"/>
<dbReference type="PhylomeDB" id="B2JA48"/>
<dbReference type="Proteomes" id="UP000001191">
    <property type="component" value="Chromosome"/>
</dbReference>
<dbReference type="GO" id="GO:0005829">
    <property type="term" value="C:cytosol"/>
    <property type="evidence" value="ECO:0007669"/>
    <property type="project" value="TreeGrafter"/>
</dbReference>
<dbReference type="GO" id="GO:0052906">
    <property type="term" value="F:tRNA (guanine(37)-N1)-methyltransferase activity"/>
    <property type="evidence" value="ECO:0007669"/>
    <property type="project" value="UniProtKB-UniRule"/>
</dbReference>
<dbReference type="GO" id="GO:0002939">
    <property type="term" value="P:tRNA N1-guanine methylation"/>
    <property type="evidence" value="ECO:0007669"/>
    <property type="project" value="TreeGrafter"/>
</dbReference>
<dbReference type="CDD" id="cd18080">
    <property type="entry name" value="TrmD-like"/>
    <property type="match status" value="1"/>
</dbReference>
<dbReference type="FunFam" id="1.10.1270.20:FF:000001">
    <property type="entry name" value="tRNA (guanine-N(1)-)-methyltransferase"/>
    <property type="match status" value="1"/>
</dbReference>
<dbReference type="FunFam" id="3.40.1280.10:FF:000001">
    <property type="entry name" value="tRNA (guanine-N(1)-)-methyltransferase"/>
    <property type="match status" value="1"/>
</dbReference>
<dbReference type="Gene3D" id="3.40.1280.10">
    <property type="match status" value="1"/>
</dbReference>
<dbReference type="Gene3D" id="1.10.1270.20">
    <property type="entry name" value="tRNA(m1g37)methyltransferase, domain 2"/>
    <property type="match status" value="1"/>
</dbReference>
<dbReference type="HAMAP" id="MF_00605">
    <property type="entry name" value="TrmD"/>
    <property type="match status" value="1"/>
</dbReference>
<dbReference type="InterPro" id="IPR029028">
    <property type="entry name" value="Alpha/beta_knot_MTases"/>
</dbReference>
<dbReference type="InterPro" id="IPR023148">
    <property type="entry name" value="tRNA_m1G_MeTrfase_C_sf"/>
</dbReference>
<dbReference type="InterPro" id="IPR002649">
    <property type="entry name" value="tRNA_m1G_MeTrfase_TrmD"/>
</dbReference>
<dbReference type="InterPro" id="IPR029026">
    <property type="entry name" value="tRNA_m1G_MTases_N"/>
</dbReference>
<dbReference type="InterPro" id="IPR016009">
    <property type="entry name" value="tRNA_MeTrfase_TRMD/TRM10"/>
</dbReference>
<dbReference type="NCBIfam" id="NF000648">
    <property type="entry name" value="PRK00026.1"/>
    <property type="match status" value="1"/>
</dbReference>
<dbReference type="NCBIfam" id="TIGR00088">
    <property type="entry name" value="trmD"/>
    <property type="match status" value="1"/>
</dbReference>
<dbReference type="PANTHER" id="PTHR46417">
    <property type="entry name" value="TRNA (GUANINE-N(1)-)-METHYLTRANSFERASE"/>
    <property type="match status" value="1"/>
</dbReference>
<dbReference type="PANTHER" id="PTHR46417:SF1">
    <property type="entry name" value="TRNA (GUANINE-N(1)-)-METHYLTRANSFERASE"/>
    <property type="match status" value="1"/>
</dbReference>
<dbReference type="Pfam" id="PF01746">
    <property type="entry name" value="tRNA_m1G_MT"/>
    <property type="match status" value="1"/>
</dbReference>
<dbReference type="PIRSF" id="PIRSF000386">
    <property type="entry name" value="tRNA_mtase"/>
    <property type="match status" value="1"/>
</dbReference>
<dbReference type="SUPFAM" id="SSF75217">
    <property type="entry name" value="alpha/beta knot"/>
    <property type="match status" value="1"/>
</dbReference>
<name>TRMD_NOSP7</name>
<evidence type="ECO:0000255" key="1">
    <source>
        <dbReference type="HAMAP-Rule" id="MF_00605"/>
    </source>
</evidence>
<protein>
    <recommendedName>
        <fullName evidence="1">tRNA (guanine-N(1)-)-methyltransferase</fullName>
        <ecNumber evidence="1">2.1.1.228</ecNumber>
    </recommendedName>
    <alternativeName>
        <fullName evidence="1">M1G-methyltransferase</fullName>
    </alternativeName>
    <alternativeName>
        <fullName evidence="1">tRNA [GM37] methyltransferase</fullName>
    </alternativeName>
</protein>
<reference key="1">
    <citation type="journal article" date="2013" name="Plant Physiol.">
        <title>A Nostoc punctiforme Sugar Transporter Necessary to Establish a Cyanobacterium-Plant Symbiosis.</title>
        <authorList>
            <person name="Ekman M."/>
            <person name="Picossi S."/>
            <person name="Campbell E.L."/>
            <person name="Meeks J.C."/>
            <person name="Flores E."/>
        </authorList>
    </citation>
    <scope>NUCLEOTIDE SEQUENCE [LARGE SCALE GENOMIC DNA]</scope>
    <source>
        <strain>ATCC 29133 / PCC 73102</strain>
    </source>
</reference>